<reference key="1">
    <citation type="submission" date="2008-06" db="EMBL/GenBank/DDBJ databases">
        <title>Complete sequence of Pelodictyon phaeoclathratiforme BU-1.</title>
        <authorList>
            <consortium name="US DOE Joint Genome Institute"/>
            <person name="Lucas S."/>
            <person name="Copeland A."/>
            <person name="Lapidus A."/>
            <person name="Glavina del Rio T."/>
            <person name="Dalin E."/>
            <person name="Tice H."/>
            <person name="Bruce D."/>
            <person name="Goodwin L."/>
            <person name="Pitluck S."/>
            <person name="Schmutz J."/>
            <person name="Larimer F."/>
            <person name="Land M."/>
            <person name="Hauser L."/>
            <person name="Kyrpides N."/>
            <person name="Mikhailova N."/>
            <person name="Liu Z."/>
            <person name="Li T."/>
            <person name="Zhao F."/>
            <person name="Overmann J."/>
            <person name="Bryant D.A."/>
            <person name="Richardson P."/>
        </authorList>
    </citation>
    <scope>NUCLEOTIDE SEQUENCE [LARGE SCALE GENOMIC DNA]</scope>
    <source>
        <strain>DSM 5477 / BU-1</strain>
    </source>
</reference>
<keyword id="KW-1185">Reference proteome</keyword>
<keyword id="KW-0687">Ribonucleoprotein</keyword>
<keyword id="KW-0689">Ribosomal protein</keyword>
<keyword id="KW-0694">RNA-binding</keyword>
<keyword id="KW-0699">rRNA-binding</keyword>
<keyword id="KW-0820">tRNA-binding</keyword>
<proteinExistence type="inferred from homology"/>
<comment type="function">
    <text evidence="1">One of the primary rRNA binding proteins, it binds directly to 16S rRNA where it nucleates assembly of the head domain of the 30S subunit. Is located at the subunit interface close to the decoding center, probably blocks exit of the E-site tRNA.</text>
</comment>
<comment type="subunit">
    <text evidence="1">Part of the 30S ribosomal subunit. Contacts proteins S9 and S11.</text>
</comment>
<comment type="similarity">
    <text evidence="1">Belongs to the universal ribosomal protein uS7 family.</text>
</comment>
<dbReference type="EMBL" id="CP001110">
    <property type="protein sequence ID" value="ACF42618.1"/>
    <property type="molecule type" value="Genomic_DNA"/>
</dbReference>
<dbReference type="RefSeq" id="WP_012507114.1">
    <property type="nucleotide sequence ID" value="NC_011060.1"/>
</dbReference>
<dbReference type="SMR" id="B4SBU3"/>
<dbReference type="STRING" id="324925.Ppha_0285"/>
<dbReference type="KEGG" id="pph:Ppha_0285"/>
<dbReference type="eggNOG" id="COG0049">
    <property type="taxonomic scope" value="Bacteria"/>
</dbReference>
<dbReference type="HOGENOM" id="CLU_072226_1_1_10"/>
<dbReference type="OrthoDB" id="9807653at2"/>
<dbReference type="Proteomes" id="UP000002724">
    <property type="component" value="Chromosome"/>
</dbReference>
<dbReference type="GO" id="GO:0015935">
    <property type="term" value="C:small ribosomal subunit"/>
    <property type="evidence" value="ECO:0007669"/>
    <property type="project" value="InterPro"/>
</dbReference>
<dbReference type="GO" id="GO:0019843">
    <property type="term" value="F:rRNA binding"/>
    <property type="evidence" value="ECO:0007669"/>
    <property type="project" value="UniProtKB-UniRule"/>
</dbReference>
<dbReference type="GO" id="GO:0003735">
    <property type="term" value="F:structural constituent of ribosome"/>
    <property type="evidence" value="ECO:0007669"/>
    <property type="project" value="InterPro"/>
</dbReference>
<dbReference type="GO" id="GO:0000049">
    <property type="term" value="F:tRNA binding"/>
    <property type="evidence" value="ECO:0007669"/>
    <property type="project" value="UniProtKB-UniRule"/>
</dbReference>
<dbReference type="GO" id="GO:0006412">
    <property type="term" value="P:translation"/>
    <property type="evidence" value="ECO:0007669"/>
    <property type="project" value="UniProtKB-UniRule"/>
</dbReference>
<dbReference type="CDD" id="cd14869">
    <property type="entry name" value="uS7_Bacteria"/>
    <property type="match status" value="1"/>
</dbReference>
<dbReference type="FunFam" id="1.10.455.10:FF:000001">
    <property type="entry name" value="30S ribosomal protein S7"/>
    <property type="match status" value="1"/>
</dbReference>
<dbReference type="Gene3D" id="1.10.455.10">
    <property type="entry name" value="Ribosomal protein S7 domain"/>
    <property type="match status" value="1"/>
</dbReference>
<dbReference type="HAMAP" id="MF_00480_B">
    <property type="entry name" value="Ribosomal_uS7_B"/>
    <property type="match status" value="1"/>
</dbReference>
<dbReference type="InterPro" id="IPR000235">
    <property type="entry name" value="Ribosomal_uS7"/>
</dbReference>
<dbReference type="InterPro" id="IPR005717">
    <property type="entry name" value="Ribosomal_uS7_bac/org-type"/>
</dbReference>
<dbReference type="InterPro" id="IPR023798">
    <property type="entry name" value="Ribosomal_uS7_dom"/>
</dbReference>
<dbReference type="InterPro" id="IPR036823">
    <property type="entry name" value="Ribosomal_uS7_dom_sf"/>
</dbReference>
<dbReference type="NCBIfam" id="TIGR01029">
    <property type="entry name" value="rpsG_bact"/>
    <property type="match status" value="1"/>
</dbReference>
<dbReference type="PANTHER" id="PTHR11205">
    <property type="entry name" value="RIBOSOMAL PROTEIN S7"/>
    <property type="match status" value="1"/>
</dbReference>
<dbReference type="Pfam" id="PF00177">
    <property type="entry name" value="Ribosomal_S7"/>
    <property type="match status" value="1"/>
</dbReference>
<dbReference type="PIRSF" id="PIRSF002122">
    <property type="entry name" value="RPS7p_RPS7a_RPS5e_RPS7o"/>
    <property type="match status" value="1"/>
</dbReference>
<dbReference type="SUPFAM" id="SSF47973">
    <property type="entry name" value="Ribosomal protein S7"/>
    <property type="match status" value="1"/>
</dbReference>
<accession>B4SBU3</accession>
<feature type="chain" id="PRO_1000125979" description="Small ribosomal subunit protein uS7">
    <location>
        <begin position="1"/>
        <end position="155"/>
    </location>
</feature>
<evidence type="ECO:0000255" key="1">
    <source>
        <dbReference type="HAMAP-Rule" id="MF_00480"/>
    </source>
</evidence>
<evidence type="ECO:0000305" key="2"/>
<sequence length="155" mass="17265">MPKKVGYKRIGVDFRYGDESVARFINAVMLDGKKAVATKIVYDAFAIIAEKLAGEDPLEVYRKAMSHIAPVVEVRSKRVGGATYQIPMEVKASRRGALAFRWLKIYAAKRGGRSMAEKLAAELMDAANEQGASVKKRDEVHRMADANKAFAHFRF</sequence>
<protein>
    <recommendedName>
        <fullName evidence="1">Small ribosomal subunit protein uS7</fullName>
    </recommendedName>
    <alternativeName>
        <fullName evidence="2">30S ribosomal protein S7</fullName>
    </alternativeName>
</protein>
<gene>
    <name evidence="1" type="primary">rpsG</name>
    <name type="ordered locus">Ppha_0285</name>
</gene>
<name>RS7_PELPB</name>
<organism>
    <name type="scientific">Pelodictyon phaeoclathratiforme (strain DSM 5477 / BU-1)</name>
    <dbReference type="NCBI Taxonomy" id="324925"/>
    <lineage>
        <taxon>Bacteria</taxon>
        <taxon>Pseudomonadati</taxon>
        <taxon>Chlorobiota</taxon>
        <taxon>Chlorobiia</taxon>
        <taxon>Chlorobiales</taxon>
        <taxon>Chlorobiaceae</taxon>
        <taxon>Chlorobium/Pelodictyon group</taxon>
        <taxon>Pelodictyon</taxon>
    </lineage>
</organism>